<gene>
    <name evidence="11" type="primary">GA20OX2</name>
    <name evidence="12" type="synonym">20ox2</name>
    <name evidence="10" type="synonym">C20ox2</name>
    <name evidence="12" type="synonym">GA20</name>
    <name evidence="10" type="synonym">Sd-1</name>
    <name evidence="9" type="synonym">SD1</name>
    <name evidence="17" type="ordered locus">Os01g0883800</name>
    <name evidence="12" type="ordered locus">LOC_Os01g66100</name>
    <name evidence="16" type="ORF">B1065E10.46</name>
</gene>
<sequence length="389" mass="42513">MVAEHPTPPQPHQPPPMDSTAGSGIAAPAAAAVCDLRMEPKIPEPFVWPNGDARPASAAELDMPVVDVGVLRDGDAEGLRRAAAQVAAACATHGFFQVSEHGVDAALARAALDGASDFFRLPLAEKRRARRVPGTVSGYTSAHADRFASKLPWKETLSFGFHDRAAAPVVADYFSSTLGPDFAPMGRVYQKYCEEMKELSLTIMELLELSLGVERGYYREFFADSSSIMRCNYYPPCPEPERTLGTGPHCDPTALTILLQDDVGGLEVLVDGEWRPVSPVPGAMVINIGDTFMALSNGRYKSCLHRAVVNQRRERRSLAFFLCPREDRVVRPPPSAATPQHYPDFTWADLMRFTQRHYRADTRTLDAFTRWLAPPAADAAATAQVEAAS</sequence>
<organism>
    <name type="scientific">Oryza sativa subsp. japonica</name>
    <name type="common">Rice</name>
    <dbReference type="NCBI Taxonomy" id="39947"/>
    <lineage>
        <taxon>Eukaryota</taxon>
        <taxon>Viridiplantae</taxon>
        <taxon>Streptophyta</taxon>
        <taxon>Embryophyta</taxon>
        <taxon>Tracheophyta</taxon>
        <taxon>Spermatophyta</taxon>
        <taxon>Magnoliopsida</taxon>
        <taxon>Liliopsida</taxon>
        <taxon>Poales</taxon>
        <taxon>Poaceae</taxon>
        <taxon>BOP clade</taxon>
        <taxon>Oryzoideae</taxon>
        <taxon>Oryzeae</taxon>
        <taxon>Oryzinae</taxon>
        <taxon>Oryza</taxon>
        <taxon>Oryza sativa</taxon>
    </lineage>
</organism>
<protein>
    <recommendedName>
        <fullName>Gibberellin 20 oxidase 2</fullName>
        <shortName evidence="11">OsGA20ox2</shortName>
        <ecNumber evidence="1">1.14.11.-</ecNumber>
    </recommendedName>
    <alternativeName>
        <fullName evidence="10">GA 20-oxidase 2</fullName>
    </alternativeName>
    <alternativeName>
        <fullName evidence="12">Gibberellin C-20 oxidase 2</fullName>
    </alternativeName>
    <alternativeName>
        <fullName evidence="10">Os20ox2</fullName>
    </alternativeName>
    <alternativeName>
        <fullName evidence="12">Protein semidwarf-1</fullName>
    </alternativeName>
</protein>
<reference key="1">
    <citation type="journal article" date="2002" name="Proc. Natl. Acad. Sci. U.S.A.">
        <title>Semidwarf (sd-1), 'green revolution' rice, contains a defective gibberellin 20-oxidase gene.</title>
        <authorList>
            <person name="Spielmeyer W."/>
            <person name="Ellis M.H."/>
            <person name="Chandler P.M."/>
        </authorList>
    </citation>
    <scope>NUCLEOTIDE SEQUENCE [MRNA]</scope>
    <scope>FUNCTION</scope>
    <scope>POLYMORPHISM</scope>
    <scope>BIOTECHNOLOGY</scope>
    <scope>VARIANT PHE-266</scope>
    <source>
        <strain>cv. Calrose</strain>
        <strain>cv. Calrose76</strain>
    </source>
</reference>
<reference key="2">
    <citation type="journal article" date="2002" name="Nature">
        <title>A mutant gibberellin-synthesis gene in rice.</title>
        <authorList>
            <person name="Sasaki A."/>
            <person name="Ashikari M."/>
            <person name="Ueguchi-Tanaka M."/>
            <person name="Itoh H."/>
            <person name="Nishimura A."/>
            <person name="Swapan D."/>
            <person name="Ishiyama K."/>
            <person name="Saito T."/>
            <person name="Kobayashi M."/>
            <person name="Khush G.S."/>
            <person name="Kitano H."/>
            <person name="Matsuoka M."/>
        </authorList>
    </citation>
    <scope>NUCLEOTIDE SEQUENCE [MRNA]</scope>
    <scope>FUNCTION</scope>
    <scope>TISSUE SPECIFICITY</scope>
    <scope>VARIANT VAL-94</scope>
    <scope>VARIANT HIS-349</scope>
    <source>
        <strain>cv. Jikkoku</strain>
        <strain>cv. Nipponbare</strain>
        <strain>cv. Reimei</strain>
    </source>
</reference>
<reference key="3">
    <citation type="journal article" date="2002" name="DNA Res.">
        <title>Positional cloning of rice semidwarfing gene, sd-1: rice 'green revolution gene' encodes a mutant enzyme involved in gibberellin synthesis.</title>
        <authorList>
            <person name="Monna L."/>
            <person name="Kitazawa N."/>
            <person name="Yoshino R."/>
            <person name="Suzuki J."/>
            <person name="Masuda H."/>
            <person name="Maehara Y."/>
            <person name="Tanji M."/>
            <person name="Sato M."/>
            <person name="Nasu S."/>
            <person name="Minobe Y."/>
        </authorList>
    </citation>
    <scope>NUCLEOTIDE SEQUENCE [MRNA]</scope>
    <scope>VARIANT PHE-266</scope>
    <scope>DEVELOPMENTAL STAGE</scope>
    <source>
        <strain>cv. Calrose</strain>
        <strain>cv. Nipponbare</strain>
        <strain>cv. Sasanishiki</strain>
    </source>
</reference>
<reference key="4">
    <citation type="submission" date="2002-01" db="EMBL/GenBank/DDBJ databases">
        <title>Map-based cloning of semidwarf gene, Sd-1, in rice.</title>
        <authorList>
            <person name="Yoon U.H."/>
            <person name="Eun M.Y."/>
            <person name="Lee J.S."/>
            <person name="Yun D.W."/>
            <person name="Kim H.I."/>
            <person name="Hahn J.H."/>
        </authorList>
    </citation>
    <scope>NUCLEOTIDE SEQUENCE [GENOMIC DNA]</scope>
    <source>
        <strain>cv. Nipponbare</strain>
    </source>
</reference>
<reference key="5">
    <citation type="journal article" date="2002" name="Nature">
        <title>The genome sequence and structure of rice chromosome 1.</title>
        <authorList>
            <person name="Sasaki T."/>
            <person name="Matsumoto T."/>
            <person name="Yamamoto K."/>
            <person name="Sakata K."/>
            <person name="Baba T."/>
            <person name="Katayose Y."/>
            <person name="Wu J."/>
            <person name="Niimura Y."/>
            <person name="Cheng Z."/>
            <person name="Nagamura Y."/>
            <person name="Antonio B.A."/>
            <person name="Kanamori H."/>
            <person name="Hosokawa S."/>
            <person name="Masukawa M."/>
            <person name="Arikawa K."/>
            <person name="Chiden Y."/>
            <person name="Hayashi M."/>
            <person name="Okamoto M."/>
            <person name="Ando T."/>
            <person name="Aoki H."/>
            <person name="Arita K."/>
            <person name="Hamada M."/>
            <person name="Harada C."/>
            <person name="Hijishita S."/>
            <person name="Honda M."/>
            <person name="Ichikawa Y."/>
            <person name="Idonuma A."/>
            <person name="Iijima M."/>
            <person name="Ikeda M."/>
            <person name="Ikeno M."/>
            <person name="Ito S."/>
            <person name="Ito T."/>
            <person name="Ito Y."/>
            <person name="Ito Y."/>
            <person name="Iwabuchi A."/>
            <person name="Kamiya K."/>
            <person name="Karasawa W."/>
            <person name="Katagiri S."/>
            <person name="Kikuta A."/>
            <person name="Kobayashi N."/>
            <person name="Kono I."/>
            <person name="Machita K."/>
            <person name="Maehara T."/>
            <person name="Mizuno H."/>
            <person name="Mizubayashi T."/>
            <person name="Mukai Y."/>
            <person name="Nagasaki H."/>
            <person name="Nakashima M."/>
            <person name="Nakama Y."/>
            <person name="Nakamichi Y."/>
            <person name="Nakamura M."/>
            <person name="Namiki N."/>
            <person name="Negishi M."/>
            <person name="Ohta I."/>
            <person name="Ono N."/>
            <person name="Saji S."/>
            <person name="Sakai K."/>
            <person name="Shibata M."/>
            <person name="Shimokawa T."/>
            <person name="Shomura A."/>
            <person name="Song J."/>
            <person name="Takazaki Y."/>
            <person name="Terasawa K."/>
            <person name="Tsuji K."/>
            <person name="Waki K."/>
            <person name="Yamagata H."/>
            <person name="Yamane H."/>
            <person name="Yoshiki S."/>
            <person name="Yoshihara R."/>
            <person name="Yukawa K."/>
            <person name="Zhong H."/>
            <person name="Iwama H."/>
            <person name="Endo T."/>
            <person name="Ito H."/>
            <person name="Hahn J.H."/>
            <person name="Kim H.-I."/>
            <person name="Eun M.-Y."/>
            <person name="Yano M."/>
            <person name="Jiang J."/>
            <person name="Gojobori T."/>
        </authorList>
    </citation>
    <scope>NUCLEOTIDE SEQUENCE [LARGE SCALE GENOMIC DNA]</scope>
    <source>
        <strain>cv. Nipponbare</strain>
    </source>
</reference>
<reference key="6">
    <citation type="journal article" date="2005" name="Nature">
        <title>The map-based sequence of the rice genome.</title>
        <authorList>
            <consortium name="International rice genome sequencing project (IRGSP)"/>
        </authorList>
    </citation>
    <scope>NUCLEOTIDE SEQUENCE [LARGE SCALE GENOMIC DNA]</scope>
    <source>
        <strain>cv. Nipponbare</strain>
    </source>
</reference>
<reference key="7">
    <citation type="journal article" date="2008" name="Nucleic Acids Res.">
        <title>The rice annotation project database (RAP-DB): 2008 update.</title>
        <authorList>
            <consortium name="The rice annotation project (RAP)"/>
        </authorList>
    </citation>
    <scope>GENOME REANNOTATION</scope>
    <source>
        <strain>cv. Nipponbare</strain>
    </source>
</reference>
<reference key="8">
    <citation type="journal article" date="2013" name="Rice">
        <title>Improvement of the Oryza sativa Nipponbare reference genome using next generation sequence and optical map data.</title>
        <authorList>
            <person name="Kawahara Y."/>
            <person name="de la Bastide M."/>
            <person name="Hamilton J.P."/>
            <person name="Kanamori H."/>
            <person name="McCombie W.R."/>
            <person name="Ouyang S."/>
            <person name="Schwartz D.C."/>
            <person name="Tanaka T."/>
            <person name="Wu J."/>
            <person name="Zhou S."/>
            <person name="Childs K.L."/>
            <person name="Davidson R.M."/>
            <person name="Lin H."/>
            <person name="Quesada-Ocampo L."/>
            <person name="Vaillancourt B."/>
            <person name="Sakai H."/>
            <person name="Lee S.S."/>
            <person name="Kim J."/>
            <person name="Numa H."/>
            <person name="Itoh T."/>
            <person name="Buell C.R."/>
            <person name="Matsumoto T."/>
        </authorList>
    </citation>
    <scope>GENOME REANNOTATION</scope>
    <source>
        <strain>cv. Nipponbare</strain>
    </source>
</reference>
<reference key="9">
    <citation type="journal article" date="2011" name="Proc. Natl. Acad. Sci. U.S.A.">
        <title>Artificial selection for a green revolution gene during japonica rice domestication.</title>
        <authorList>
            <person name="Asano K."/>
            <person name="Yamasaki M."/>
            <person name="Takuno S."/>
            <person name="Miura K."/>
            <person name="Katagiri S."/>
            <person name="Ito T."/>
            <person name="Doi K."/>
            <person name="Wu J."/>
            <person name="Ebana K."/>
            <person name="Matsumoto T."/>
            <person name="Innan H."/>
            <person name="Kitano H."/>
            <person name="Ashikari M."/>
            <person name="Matsuoka M."/>
        </authorList>
    </citation>
    <scope>BIOTECHNOLOGY</scope>
</reference>
<reference key="10">
    <citation type="journal article" date="2018" name="Science">
        <title>Ethylene-gibberellin signaling underlies adaptation of rice to periodic flooding.</title>
        <authorList>
            <person name="Kuroha T."/>
            <person name="Nagai K."/>
            <person name="Gamuyao R."/>
            <person name="Wang D.R."/>
            <person name="Furuta T."/>
            <person name="Nakamori M."/>
            <person name="Kitaoka T."/>
            <person name="Adachi K."/>
            <person name="Minami A."/>
            <person name="Mori Y."/>
            <person name="Mashiguchi K."/>
            <person name="Seto Y."/>
            <person name="Yamaguchi S."/>
            <person name="Kojima M."/>
            <person name="Sakakibara H."/>
            <person name="Wu J."/>
            <person name="Ebana K."/>
            <person name="Mitsuda N."/>
            <person name="Ohme-Takagi M."/>
            <person name="Yanagisawa S."/>
            <person name="Yamasaki M."/>
            <person name="Yokoyama R."/>
            <person name="Nishitani K."/>
            <person name="Mochizuki T."/>
            <person name="Tamiya G."/>
            <person name="McCouch S.R."/>
            <person name="Ashikari M."/>
        </authorList>
    </citation>
    <scope>FUNCTION</scope>
    <scope>INDUCTION BY ETHYLENE</scope>
</reference>
<comment type="function">
    <text evidence="6 7 8">Key oxidase enzyme in the biosynthesis of gibberellin that catalyzes the conversion of GA53 to GA20 via a three-step oxidation at C-20 of the GA skeleton (PubMed:11961544, PubMed:12077303, PubMed:30002253). Catalyzes the conversion of GA12 to GA9 via a three-step oxidation at C-20 of the GA skeleton (PubMed:30002253). Contributes to the promotion of internode elongation in response to submergence via ethylene and gibberellin signalings (PubMed:30002253).</text>
</comment>
<comment type="catalytic activity">
    <reaction evidence="1">
        <text>gibberellin A12 + 2 2-oxoglutarate + 3 O2 + H(+) = gibberellin A9 + 2 succinate + 3 CO2 + 2 H2O</text>
        <dbReference type="Rhea" id="RHEA:60772"/>
        <dbReference type="ChEBI" id="CHEBI:15377"/>
        <dbReference type="ChEBI" id="CHEBI:15378"/>
        <dbReference type="ChEBI" id="CHEBI:15379"/>
        <dbReference type="ChEBI" id="CHEBI:16526"/>
        <dbReference type="ChEBI" id="CHEBI:16810"/>
        <dbReference type="ChEBI" id="CHEBI:30031"/>
        <dbReference type="ChEBI" id="CHEBI:58627"/>
        <dbReference type="ChEBI" id="CHEBI:73255"/>
    </reaction>
    <physiologicalReaction direction="left-to-right" evidence="1">
        <dbReference type="Rhea" id="RHEA:60773"/>
    </physiologicalReaction>
</comment>
<comment type="catalytic activity">
    <reaction evidence="1">
        <text>gibberellin A53 + 2 2-oxoglutarate + 3 O2 + H(+) = gibberellin A20 + 2 succinate + 3 CO2 + 2 H2O</text>
        <dbReference type="Rhea" id="RHEA:60796"/>
        <dbReference type="ChEBI" id="CHEBI:15377"/>
        <dbReference type="ChEBI" id="CHEBI:15378"/>
        <dbReference type="ChEBI" id="CHEBI:15379"/>
        <dbReference type="ChEBI" id="CHEBI:16526"/>
        <dbReference type="ChEBI" id="CHEBI:16810"/>
        <dbReference type="ChEBI" id="CHEBI:30031"/>
        <dbReference type="ChEBI" id="CHEBI:58526"/>
        <dbReference type="ChEBI" id="CHEBI:143954"/>
    </reaction>
    <physiologicalReaction direction="left-to-right" evidence="1">
        <dbReference type="Rhea" id="RHEA:60797"/>
    </physiologicalReaction>
</comment>
<comment type="cofactor">
    <cofactor evidence="12">
        <name>Fe cation</name>
        <dbReference type="ChEBI" id="CHEBI:24875"/>
    </cofactor>
</comment>
<comment type="cofactor">
    <cofactor evidence="12">
        <name>L-ascorbate</name>
        <dbReference type="ChEBI" id="CHEBI:38290"/>
    </cofactor>
</comment>
<comment type="tissue specificity">
    <text evidence="6">Strongly expressed in leaf blades, stems and unopened flowers. Lower expression in leaf sheath, rachis, shoot apex and roots.</text>
</comment>
<comment type="developmental stage">
    <text evidence="5">Expressed within 48 hours after sowing, as well as in 10-day-old plants and flowering panicles.</text>
</comment>
<comment type="induction">
    <text evidence="8">Induced by ethylene.</text>
</comment>
<comment type="polymorphism">
    <text evidence="14">Sd-1 is the major semidwarfing allele extensively used in modern rice cultivars.</text>
</comment>
<comment type="biotechnology">
    <text evidence="14 15">This gene, also known as the 'green revolution gene' has been introduced by conventional breeding procedures into several cultivars. It provides rice cultivars with short, thick culms, raises the harvest index, improves lodging resistance and responsiveness to nitrogen fertilizer, resulting high yields without affecting panicle and grain quality.</text>
</comment>
<comment type="miscellaneous">
    <text evidence="13">A second gene, 20ox1, is preferentially expressed in the reproductive organs and enables the flowers in sd1 plants to develop and be fertilized normally.</text>
</comment>
<comment type="similarity">
    <text evidence="12">Belongs to the iron/ascorbate-dependent oxidoreductase family. GA20OX subfamily.</text>
</comment>
<accession>Q0JH50</accession>
<accession>Q6YLX3</accession>
<accession>Q7EC22</accession>
<accession>Q7GBH4</accession>
<accession>Q8RVF5</accession>
<accession>Q8S492</accession>
<proteinExistence type="evidence at transcript level"/>
<feature type="chain" id="PRO_0000219521" description="Gibberellin 20 oxidase 2">
    <location>
        <begin position="1"/>
        <end position="389"/>
    </location>
</feature>
<feature type="domain" description="Fe2OG dioxygenase" evidence="3">
    <location>
        <begin position="224"/>
        <end position="324"/>
    </location>
</feature>
<feature type="region of interest" description="Disordered" evidence="4">
    <location>
        <begin position="1"/>
        <end position="23"/>
    </location>
</feature>
<feature type="compositionally biased region" description="Pro residues" evidence="4">
    <location>
        <begin position="1"/>
        <end position="17"/>
    </location>
</feature>
<feature type="active site" evidence="2">
    <location>
        <position position="315"/>
    </location>
</feature>
<feature type="binding site" evidence="3">
    <location>
        <position position="249"/>
    </location>
    <ligand>
        <name>Fe cation</name>
        <dbReference type="ChEBI" id="CHEBI:24875"/>
    </ligand>
</feature>
<feature type="binding site" evidence="3">
    <location>
        <position position="251"/>
    </location>
    <ligand>
        <name>Fe cation</name>
        <dbReference type="ChEBI" id="CHEBI:24875"/>
    </ligand>
</feature>
<feature type="binding site" evidence="3">
    <location>
        <position position="305"/>
    </location>
    <ligand>
        <name>Fe cation</name>
        <dbReference type="ChEBI" id="CHEBI:24875"/>
    </ligand>
</feature>
<feature type="sequence variant" description="In strain: cv. Jikkoku; semidwarfing." evidence="6">
    <original>G</original>
    <variation>V</variation>
    <location>
        <position position="94"/>
    </location>
</feature>
<feature type="sequence variant" description="In strain: cv. Calrose76; semidwarfing." evidence="5 7">
    <original>L</original>
    <variation>F</variation>
    <location>
        <position position="266"/>
    </location>
</feature>
<feature type="sequence variant" description="In strain: cv. Reimei; semidwarfing." evidence="6">
    <original>D</original>
    <variation>H</variation>
    <location>
        <position position="349"/>
    </location>
</feature>
<name>GAOX2_ORYSJ</name>
<evidence type="ECO:0000250" key="1">
    <source>
        <dbReference type="UniProtKB" id="O04705"/>
    </source>
</evidence>
<evidence type="ECO:0000255" key="2"/>
<evidence type="ECO:0000255" key="3">
    <source>
        <dbReference type="PROSITE-ProRule" id="PRU00805"/>
    </source>
</evidence>
<evidence type="ECO:0000256" key="4">
    <source>
        <dbReference type="SAM" id="MobiDB-lite"/>
    </source>
</evidence>
<evidence type="ECO:0000269" key="5">
    <source>
    </source>
</evidence>
<evidence type="ECO:0000269" key="6">
    <source>
    </source>
</evidence>
<evidence type="ECO:0000269" key="7">
    <source>
    </source>
</evidence>
<evidence type="ECO:0000269" key="8">
    <source>
    </source>
</evidence>
<evidence type="ECO:0000303" key="9">
    <source>
    </source>
</evidence>
<evidence type="ECO:0000303" key="10">
    <source>
    </source>
</evidence>
<evidence type="ECO:0000303" key="11">
    <source>
    </source>
</evidence>
<evidence type="ECO:0000305" key="12"/>
<evidence type="ECO:0000305" key="13">
    <source>
    </source>
</evidence>
<evidence type="ECO:0000305" key="14">
    <source>
    </source>
</evidence>
<evidence type="ECO:0000305" key="15">
    <source>
    </source>
</evidence>
<evidence type="ECO:0000312" key="16">
    <source>
        <dbReference type="EMBL" id="BAB90378.1"/>
    </source>
</evidence>
<evidence type="ECO:0000312" key="17">
    <source>
        <dbReference type="EMBL" id="BAS75582.1"/>
    </source>
</evidence>
<dbReference type="EC" id="1.14.11.-" evidence="1"/>
<dbReference type="EMBL" id="AB077025">
    <property type="protein sequence ID" value="BAB89356.1"/>
    <property type="molecule type" value="mRNA"/>
</dbReference>
<dbReference type="EMBL" id="AF465255">
    <property type="protein sequence ID" value="AAL87949.1"/>
    <property type="molecule type" value="Genomic_DNA"/>
</dbReference>
<dbReference type="EMBL" id="AP003561">
    <property type="protein sequence ID" value="BAB90378.1"/>
    <property type="molecule type" value="Genomic_DNA"/>
</dbReference>
<dbReference type="EMBL" id="AP008207">
    <property type="protein sequence ID" value="BAF06928.1"/>
    <property type="molecule type" value="Genomic_DNA"/>
</dbReference>
<dbReference type="EMBL" id="AP014957">
    <property type="protein sequence ID" value="BAS75582.1"/>
    <property type="molecule type" value="Genomic_DNA"/>
</dbReference>
<dbReference type="RefSeq" id="XP_015627721.1">
    <property type="nucleotide sequence ID" value="XM_015772235.1"/>
</dbReference>
<dbReference type="SMR" id="Q0JH50"/>
<dbReference type="FunCoup" id="Q0JH50">
    <property type="interactions" value="32"/>
</dbReference>
<dbReference type="STRING" id="39947.Q0JH50"/>
<dbReference type="PaxDb" id="39947-Q0JH50"/>
<dbReference type="EnsemblPlants" id="Os01t0883800-02">
    <property type="protein sequence ID" value="Os01t0883800-02"/>
    <property type="gene ID" value="Os01g0883800"/>
</dbReference>
<dbReference type="Gramene" id="Os01t0883800-02">
    <property type="protein sequence ID" value="Os01t0883800-02"/>
    <property type="gene ID" value="Os01g0883800"/>
</dbReference>
<dbReference type="KEGG" id="dosa:Os01g0883800"/>
<dbReference type="eggNOG" id="KOG0143">
    <property type="taxonomic scope" value="Eukaryota"/>
</dbReference>
<dbReference type="HOGENOM" id="CLU_010119_16_3_1"/>
<dbReference type="InParanoid" id="Q0JH50"/>
<dbReference type="OMA" id="FCDAMNG"/>
<dbReference type="OrthoDB" id="288590at2759"/>
<dbReference type="BioCyc" id="MetaCyc:MONOMER-11633"/>
<dbReference type="Proteomes" id="UP000000763">
    <property type="component" value="Chromosome 1"/>
</dbReference>
<dbReference type="Proteomes" id="UP000059680">
    <property type="component" value="Chromosome 1"/>
</dbReference>
<dbReference type="ExpressionAtlas" id="Q0JH50">
    <property type="expression patterns" value="baseline and differential"/>
</dbReference>
<dbReference type="GO" id="GO:0051213">
    <property type="term" value="F:dioxygenase activity"/>
    <property type="evidence" value="ECO:0000314"/>
    <property type="project" value="UniProtKB"/>
</dbReference>
<dbReference type="GO" id="GO:0045544">
    <property type="term" value="F:gibberellin 20-oxidase activity"/>
    <property type="evidence" value="ECO:0000318"/>
    <property type="project" value="GO_Central"/>
</dbReference>
<dbReference type="GO" id="GO:0046872">
    <property type="term" value="F:metal ion binding"/>
    <property type="evidence" value="ECO:0007669"/>
    <property type="project" value="UniProtKB-KW"/>
</dbReference>
<dbReference type="GO" id="GO:0009908">
    <property type="term" value="P:flower development"/>
    <property type="evidence" value="ECO:0000318"/>
    <property type="project" value="GO_Central"/>
</dbReference>
<dbReference type="GO" id="GO:0009686">
    <property type="term" value="P:gibberellin biosynthetic process"/>
    <property type="evidence" value="ECO:0000314"/>
    <property type="project" value="UniProtKB"/>
</dbReference>
<dbReference type="GO" id="GO:0009413">
    <property type="term" value="P:response to flooding"/>
    <property type="evidence" value="ECO:0000315"/>
    <property type="project" value="UniProtKB"/>
</dbReference>
<dbReference type="GO" id="GO:0009416">
    <property type="term" value="P:response to light stimulus"/>
    <property type="evidence" value="ECO:0000318"/>
    <property type="project" value="GO_Central"/>
</dbReference>
<dbReference type="GO" id="GO:0009826">
    <property type="term" value="P:unidimensional cell growth"/>
    <property type="evidence" value="ECO:0000318"/>
    <property type="project" value="GO_Central"/>
</dbReference>
<dbReference type="FunFam" id="2.60.120.330:FF:000003">
    <property type="entry name" value="Gibberellin 20 oxidase 2"/>
    <property type="match status" value="1"/>
</dbReference>
<dbReference type="Gene3D" id="2.60.120.330">
    <property type="entry name" value="B-lactam Antibiotic, Isopenicillin N Synthase, Chain"/>
    <property type="match status" value="1"/>
</dbReference>
<dbReference type="InterPro" id="IPR026992">
    <property type="entry name" value="DIOX_N"/>
</dbReference>
<dbReference type="InterPro" id="IPR044861">
    <property type="entry name" value="IPNS-like_FE2OG_OXY"/>
</dbReference>
<dbReference type="InterPro" id="IPR027443">
    <property type="entry name" value="IPNS-like_sf"/>
</dbReference>
<dbReference type="InterPro" id="IPR050231">
    <property type="entry name" value="Iron_ascorbate_oxido_reductase"/>
</dbReference>
<dbReference type="InterPro" id="IPR005123">
    <property type="entry name" value="Oxoglu/Fe-dep_dioxygenase_dom"/>
</dbReference>
<dbReference type="PANTHER" id="PTHR47990">
    <property type="entry name" value="2-OXOGLUTARATE (2OG) AND FE(II)-DEPENDENT OXYGENASE SUPERFAMILY PROTEIN-RELATED"/>
    <property type="match status" value="1"/>
</dbReference>
<dbReference type="Pfam" id="PF03171">
    <property type="entry name" value="2OG-FeII_Oxy"/>
    <property type="match status" value="1"/>
</dbReference>
<dbReference type="Pfam" id="PF14226">
    <property type="entry name" value="DIOX_N"/>
    <property type="match status" value="1"/>
</dbReference>
<dbReference type="PRINTS" id="PR00682">
    <property type="entry name" value="IPNSYNTHASE"/>
</dbReference>
<dbReference type="SUPFAM" id="SSF51197">
    <property type="entry name" value="Clavaminate synthase-like"/>
    <property type="match status" value="1"/>
</dbReference>
<dbReference type="PROSITE" id="PS51471">
    <property type="entry name" value="FE2OG_OXY"/>
    <property type="match status" value="1"/>
</dbReference>
<keyword id="KW-0408">Iron</keyword>
<keyword id="KW-0479">Metal-binding</keyword>
<keyword id="KW-0560">Oxidoreductase</keyword>
<keyword id="KW-1185">Reference proteome</keyword>